<evidence type="ECO:0000255" key="1">
    <source>
        <dbReference type="HAMAP-Rule" id="MF_00817"/>
    </source>
</evidence>
<gene>
    <name evidence="1" type="primary">queF</name>
    <name type="ordered locus">YPDSF_1679</name>
</gene>
<proteinExistence type="inferred from homology"/>
<accession>A4TLA2</accession>
<dbReference type="EC" id="1.7.1.13" evidence="1"/>
<dbReference type="EMBL" id="CP000668">
    <property type="protein sequence ID" value="ABP40064.1"/>
    <property type="molecule type" value="Genomic_DNA"/>
</dbReference>
<dbReference type="RefSeq" id="WP_002212122.1">
    <property type="nucleotide sequence ID" value="NZ_CP009715.1"/>
</dbReference>
<dbReference type="SMR" id="A4TLA2"/>
<dbReference type="GeneID" id="57977527"/>
<dbReference type="KEGG" id="ypp:YPDSF_1679"/>
<dbReference type="PATRIC" id="fig|386656.14.peg.2084"/>
<dbReference type="UniPathway" id="UPA00392"/>
<dbReference type="GO" id="GO:0005737">
    <property type="term" value="C:cytoplasm"/>
    <property type="evidence" value="ECO:0007669"/>
    <property type="project" value="UniProtKB-SubCell"/>
</dbReference>
<dbReference type="GO" id="GO:0033739">
    <property type="term" value="F:preQ1 synthase activity"/>
    <property type="evidence" value="ECO:0007669"/>
    <property type="project" value="UniProtKB-UniRule"/>
</dbReference>
<dbReference type="GO" id="GO:0008616">
    <property type="term" value="P:queuosine biosynthetic process"/>
    <property type="evidence" value="ECO:0007669"/>
    <property type="project" value="UniProtKB-UniRule"/>
</dbReference>
<dbReference type="GO" id="GO:0006400">
    <property type="term" value="P:tRNA modification"/>
    <property type="evidence" value="ECO:0007669"/>
    <property type="project" value="UniProtKB-UniRule"/>
</dbReference>
<dbReference type="Gene3D" id="3.30.1130.10">
    <property type="match status" value="2"/>
</dbReference>
<dbReference type="HAMAP" id="MF_00817">
    <property type="entry name" value="QueF_type2"/>
    <property type="match status" value="1"/>
</dbReference>
<dbReference type="InterPro" id="IPR043133">
    <property type="entry name" value="GTP-CH-I_C/QueF"/>
</dbReference>
<dbReference type="InterPro" id="IPR050084">
    <property type="entry name" value="NADPH_dep_7-cyano-7-deazaG_red"/>
</dbReference>
<dbReference type="InterPro" id="IPR029500">
    <property type="entry name" value="QueF"/>
</dbReference>
<dbReference type="InterPro" id="IPR029139">
    <property type="entry name" value="QueF_N"/>
</dbReference>
<dbReference type="InterPro" id="IPR016428">
    <property type="entry name" value="QueF_type2"/>
</dbReference>
<dbReference type="NCBIfam" id="TIGR03138">
    <property type="entry name" value="QueF"/>
    <property type="match status" value="1"/>
</dbReference>
<dbReference type="PANTHER" id="PTHR34354">
    <property type="entry name" value="NADPH-DEPENDENT 7-CYANO-7-DEAZAGUANINE REDUCTASE"/>
    <property type="match status" value="1"/>
</dbReference>
<dbReference type="PANTHER" id="PTHR34354:SF1">
    <property type="entry name" value="NADPH-DEPENDENT 7-CYANO-7-DEAZAGUANINE REDUCTASE"/>
    <property type="match status" value="1"/>
</dbReference>
<dbReference type="Pfam" id="PF14489">
    <property type="entry name" value="QueF"/>
    <property type="match status" value="1"/>
</dbReference>
<dbReference type="Pfam" id="PF14819">
    <property type="entry name" value="QueF_N"/>
    <property type="match status" value="1"/>
</dbReference>
<dbReference type="PIRSF" id="PIRSF004750">
    <property type="entry name" value="Nitrile_oxidored_YqcD_prd"/>
    <property type="match status" value="1"/>
</dbReference>
<dbReference type="SUPFAM" id="SSF55620">
    <property type="entry name" value="Tetrahydrobiopterin biosynthesis enzymes-like"/>
    <property type="match status" value="1"/>
</dbReference>
<comment type="function">
    <text evidence="1">Catalyzes the NADPH-dependent reduction of 7-cyano-7-deazaguanine (preQ0) to 7-aminomethyl-7-deazaguanine (preQ1).</text>
</comment>
<comment type="catalytic activity">
    <reaction evidence="1">
        <text>7-aminomethyl-7-carbaguanine + 2 NADP(+) = 7-cyano-7-deazaguanine + 2 NADPH + 3 H(+)</text>
        <dbReference type="Rhea" id="RHEA:13409"/>
        <dbReference type="ChEBI" id="CHEBI:15378"/>
        <dbReference type="ChEBI" id="CHEBI:45075"/>
        <dbReference type="ChEBI" id="CHEBI:57783"/>
        <dbReference type="ChEBI" id="CHEBI:58349"/>
        <dbReference type="ChEBI" id="CHEBI:58703"/>
        <dbReference type="EC" id="1.7.1.13"/>
    </reaction>
</comment>
<comment type="pathway">
    <text evidence="1">tRNA modification; tRNA-queuosine biosynthesis.</text>
</comment>
<comment type="subunit">
    <text evidence="1">Homodimer.</text>
</comment>
<comment type="subcellular location">
    <subcellularLocation>
        <location evidence="1">Cytoplasm</location>
    </subcellularLocation>
</comment>
<comment type="similarity">
    <text evidence="1">Belongs to the GTP cyclohydrolase I family. QueF type 2 subfamily.</text>
</comment>
<keyword id="KW-0963">Cytoplasm</keyword>
<keyword id="KW-0521">NADP</keyword>
<keyword id="KW-0560">Oxidoreductase</keyword>
<keyword id="KW-0671">Queuosine biosynthesis</keyword>
<protein>
    <recommendedName>
        <fullName evidence="1">NADPH-dependent 7-cyano-7-deazaguanine reductase</fullName>
        <ecNumber evidence="1">1.7.1.13</ecNumber>
    </recommendedName>
    <alternativeName>
        <fullName evidence="1">7-cyano-7-carbaguanine reductase</fullName>
    </alternativeName>
    <alternativeName>
        <fullName evidence="1">NADPH-dependent nitrile oxidoreductase</fullName>
    </alternativeName>
    <alternativeName>
        <fullName evidence="1">PreQ(0) reductase</fullName>
    </alternativeName>
</protein>
<feature type="chain" id="PRO_1000062372" description="NADPH-dependent 7-cyano-7-deazaguanine reductase">
    <location>
        <begin position="1"/>
        <end position="281"/>
    </location>
</feature>
<feature type="active site" description="Thioimide intermediate" evidence="1">
    <location>
        <position position="189"/>
    </location>
</feature>
<feature type="active site" description="Proton donor" evidence="1">
    <location>
        <position position="196"/>
    </location>
</feature>
<feature type="binding site" evidence="1">
    <location>
        <begin position="88"/>
        <end position="90"/>
    </location>
    <ligand>
        <name>substrate</name>
    </ligand>
</feature>
<feature type="binding site" evidence="1">
    <location>
        <begin position="90"/>
        <end position="91"/>
    </location>
    <ligand>
        <name>NADPH</name>
        <dbReference type="ChEBI" id="CHEBI:57783"/>
    </ligand>
</feature>
<feature type="binding site" evidence="1">
    <location>
        <begin position="228"/>
        <end position="229"/>
    </location>
    <ligand>
        <name>substrate</name>
    </ligand>
</feature>
<feature type="binding site" evidence="1">
    <location>
        <begin position="257"/>
        <end position="258"/>
    </location>
    <ligand>
        <name>NADPH</name>
        <dbReference type="ChEBI" id="CHEBI:57783"/>
    </ligand>
</feature>
<organism>
    <name type="scientific">Yersinia pestis (strain Pestoides F)</name>
    <dbReference type="NCBI Taxonomy" id="386656"/>
    <lineage>
        <taxon>Bacteria</taxon>
        <taxon>Pseudomonadati</taxon>
        <taxon>Pseudomonadota</taxon>
        <taxon>Gammaproteobacteria</taxon>
        <taxon>Enterobacterales</taxon>
        <taxon>Yersiniaceae</taxon>
        <taxon>Yersinia</taxon>
    </lineage>
</organism>
<name>QUEF_YERPP</name>
<sequence>MSSYQNHKALAELTLGKPTAYCDYYDATLLQAVPRSMNREPLGLYPDNLPFHGADIWTLYELSWLNSNGLPQVAVGEISLNADSINLIESKSFKLYLNSFNQTIFADKESVRMTLQRDLAACAQGNVSVALYDLDEITGQPISNFNGECLDKQDIRIDSYEFNADYLQGAAGKDHVEESLVSHLLKSNCLITHQPDWGSVQIHYRGPQIDHEALLRYLVSFRHHNEFHEQCVERIFNDIMRFCQPETLTVYARYTRRGGLDINPWRSNTDFVPLTGRLARQ</sequence>
<reference key="1">
    <citation type="submission" date="2007-02" db="EMBL/GenBank/DDBJ databases">
        <title>Complete sequence of chromosome of Yersinia pestis Pestoides F.</title>
        <authorList>
            <consortium name="US DOE Joint Genome Institute"/>
            <person name="Copeland A."/>
            <person name="Lucas S."/>
            <person name="Lapidus A."/>
            <person name="Barry K."/>
            <person name="Detter J.C."/>
            <person name="Glavina del Rio T."/>
            <person name="Hammon N."/>
            <person name="Israni S."/>
            <person name="Dalin E."/>
            <person name="Tice H."/>
            <person name="Pitluck S."/>
            <person name="Di Bartolo G."/>
            <person name="Chain P."/>
            <person name="Malfatti S."/>
            <person name="Shin M."/>
            <person name="Vergez L."/>
            <person name="Schmutz J."/>
            <person name="Larimer F."/>
            <person name="Land M."/>
            <person name="Hauser L."/>
            <person name="Worsham P."/>
            <person name="Chu M."/>
            <person name="Bearden S."/>
            <person name="Garcia E."/>
            <person name="Richardson P."/>
        </authorList>
    </citation>
    <scope>NUCLEOTIDE SEQUENCE [LARGE SCALE GENOMIC DNA]</scope>
    <source>
        <strain>Pestoides F</strain>
    </source>
</reference>